<proteinExistence type="predicted"/>
<organism>
    <name type="scientific">Acanthamoeba polyphaga mimivirus</name>
    <name type="common">APMV</name>
    <dbReference type="NCBI Taxonomy" id="212035"/>
    <lineage>
        <taxon>Viruses</taxon>
        <taxon>Varidnaviria</taxon>
        <taxon>Bamfordvirae</taxon>
        <taxon>Nucleocytoviricota</taxon>
        <taxon>Megaviricetes</taxon>
        <taxon>Imitervirales</taxon>
        <taxon>Mimiviridae</taxon>
        <taxon>Megamimivirinae</taxon>
        <taxon>Mimivirus</taxon>
        <taxon>Mimivirus bradfordmassiliense</taxon>
    </lineage>
</organism>
<gene>
    <name type="ordered locus">MIMI_R292</name>
</gene>
<dbReference type="EMBL" id="AY653733">
    <property type="protein sequence ID" value="AAV50564.1"/>
    <property type="molecule type" value="Genomic_DNA"/>
</dbReference>
<dbReference type="SMR" id="Q5UPW8"/>
<dbReference type="KEGG" id="vg:9924907"/>
<dbReference type="OrthoDB" id="41529at10239"/>
<dbReference type="Proteomes" id="UP000001134">
    <property type="component" value="Genome"/>
</dbReference>
<feature type="chain" id="PRO_0000071260" description="Uncharacterized protein R292">
    <location>
        <begin position="1"/>
        <end position="191"/>
    </location>
</feature>
<feature type="region of interest" description="Disordered" evidence="2">
    <location>
        <begin position="52"/>
        <end position="112"/>
    </location>
</feature>
<feature type="coiled-coil region" evidence="1">
    <location>
        <begin position="138"/>
        <end position="172"/>
    </location>
</feature>
<feature type="compositionally biased region" description="Polar residues" evidence="2">
    <location>
        <begin position="57"/>
        <end position="70"/>
    </location>
</feature>
<feature type="compositionally biased region" description="Low complexity" evidence="2">
    <location>
        <begin position="71"/>
        <end position="94"/>
    </location>
</feature>
<sequence length="191" mass="22180">MNYKDQLLKQMVDGKYDRKKYLNMYQRKYNLNSPKISTKPVTIDRARFLVKNKQENQTESSDLNNTDSLVDSNSDNQTNTTDTSTNNVENLNENVTEESTNDTNKDTNIETNNQTKILSPTKSFSPNKKVMDNVLKNQDKISDTERIRFLEEKVSKLERKIRTLSLQMTKISGRSNRFTDKSIKVGPKVYH</sequence>
<keyword id="KW-0175">Coiled coil</keyword>
<keyword id="KW-1185">Reference proteome</keyword>
<evidence type="ECO:0000255" key="1"/>
<evidence type="ECO:0000256" key="2">
    <source>
        <dbReference type="SAM" id="MobiDB-lite"/>
    </source>
</evidence>
<protein>
    <recommendedName>
        <fullName>Uncharacterized protein R292</fullName>
    </recommendedName>
</protein>
<reference key="1">
    <citation type="journal article" date="2004" name="Science">
        <title>The 1.2-megabase genome sequence of Mimivirus.</title>
        <authorList>
            <person name="Raoult D."/>
            <person name="Audic S."/>
            <person name="Robert C."/>
            <person name="Abergel C."/>
            <person name="Renesto P."/>
            <person name="Ogata H."/>
            <person name="La Scola B."/>
            <person name="Susan M."/>
            <person name="Claverie J.-M."/>
        </authorList>
    </citation>
    <scope>NUCLEOTIDE SEQUENCE [LARGE SCALE GENOMIC DNA]</scope>
    <source>
        <strain>Rowbotham-Bradford</strain>
    </source>
</reference>
<name>YR292_MIMIV</name>
<organismHost>
    <name type="scientific">Acanthamoeba polyphaga</name>
    <name type="common">Amoeba</name>
    <dbReference type="NCBI Taxonomy" id="5757"/>
</organismHost>
<accession>Q5UPW8</accession>